<evidence type="ECO:0000255" key="1">
    <source>
        <dbReference type="HAMAP-Rule" id="MF_00184"/>
    </source>
</evidence>
<evidence type="ECO:0000255" key="2">
    <source>
        <dbReference type="PROSITE-ProRule" id="PRU01228"/>
    </source>
</evidence>
<proteinExistence type="inferred from homology"/>
<organism>
    <name type="scientific">Tolumonas auensis (strain DSM 9187 / NBRC 110442 / TA 4)</name>
    <dbReference type="NCBI Taxonomy" id="595494"/>
    <lineage>
        <taxon>Bacteria</taxon>
        <taxon>Pseudomonadati</taxon>
        <taxon>Pseudomonadota</taxon>
        <taxon>Gammaproteobacteria</taxon>
        <taxon>Aeromonadales</taxon>
        <taxon>Aeromonadaceae</taxon>
        <taxon>Tolumonas</taxon>
    </lineage>
</organism>
<feature type="chain" id="PRO_1000203930" description="Threonine--tRNA ligase">
    <location>
        <begin position="1"/>
        <end position="642"/>
    </location>
</feature>
<feature type="domain" description="TGS" evidence="2">
    <location>
        <begin position="1"/>
        <end position="61"/>
    </location>
</feature>
<feature type="region of interest" description="Catalytic" evidence="1">
    <location>
        <begin position="243"/>
        <end position="534"/>
    </location>
</feature>
<feature type="binding site" evidence="1">
    <location>
        <position position="334"/>
    </location>
    <ligand>
        <name>Zn(2+)</name>
        <dbReference type="ChEBI" id="CHEBI:29105"/>
    </ligand>
</feature>
<feature type="binding site" evidence="1">
    <location>
        <position position="385"/>
    </location>
    <ligand>
        <name>Zn(2+)</name>
        <dbReference type="ChEBI" id="CHEBI:29105"/>
    </ligand>
</feature>
<feature type="binding site" evidence="1">
    <location>
        <position position="511"/>
    </location>
    <ligand>
        <name>Zn(2+)</name>
        <dbReference type="ChEBI" id="CHEBI:29105"/>
    </ligand>
</feature>
<gene>
    <name evidence="1" type="primary">thrS</name>
    <name type="ordered locus">Tola_1730</name>
</gene>
<accession>C4LFH3</accession>
<reference key="1">
    <citation type="submission" date="2009-05" db="EMBL/GenBank/DDBJ databases">
        <title>Complete sequence of Tolumonas auensis DSM 9187.</title>
        <authorList>
            <consortium name="US DOE Joint Genome Institute"/>
            <person name="Lucas S."/>
            <person name="Copeland A."/>
            <person name="Lapidus A."/>
            <person name="Glavina del Rio T."/>
            <person name="Tice H."/>
            <person name="Bruce D."/>
            <person name="Goodwin L."/>
            <person name="Pitluck S."/>
            <person name="Chertkov O."/>
            <person name="Brettin T."/>
            <person name="Detter J.C."/>
            <person name="Han C."/>
            <person name="Larimer F."/>
            <person name="Land M."/>
            <person name="Hauser L."/>
            <person name="Kyrpides N."/>
            <person name="Mikhailova N."/>
            <person name="Spring S."/>
            <person name="Beller H."/>
        </authorList>
    </citation>
    <scope>NUCLEOTIDE SEQUENCE [LARGE SCALE GENOMIC DNA]</scope>
    <source>
        <strain>DSM 9187 / NBRC 110442 / TA 4</strain>
    </source>
</reference>
<protein>
    <recommendedName>
        <fullName evidence="1">Threonine--tRNA ligase</fullName>
        <ecNumber evidence="1">6.1.1.3</ecNumber>
    </recommendedName>
    <alternativeName>
        <fullName evidence="1">Threonyl-tRNA synthetase</fullName>
        <shortName evidence="1">ThrRS</shortName>
    </alternativeName>
</protein>
<dbReference type="EC" id="6.1.1.3" evidence="1"/>
<dbReference type="EMBL" id="CP001616">
    <property type="protein sequence ID" value="ACQ93340.1"/>
    <property type="molecule type" value="Genomic_DNA"/>
</dbReference>
<dbReference type="RefSeq" id="WP_015878811.1">
    <property type="nucleotide sequence ID" value="NC_012691.1"/>
</dbReference>
<dbReference type="SMR" id="C4LFH3"/>
<dbReference type="STRING" id="595494.Tola_1730"/>
<dbReference type="KEGG" id="tau:Tola_1730"/>
<dbReference type="eggNOG" id="COG0441">
    <property type="taxonomic scope" value="Bacteria"/>
</dbReference>
<dbReference type="HOGENOM" id="CLU_008554_0_1_6"/>
<dbReference type="OrthoDB" id="9802304at2"/>
<dbReference type="Proteomes" id="UP000009073">
    <property type="component" value="Chromosome"/>
</dbReference>
<dbReference type="GO" id="GO:0005829">
    <property type="term" value="C:cytosol"/>
    <property type="evidence" value="ECO:0007669"/>
    <property type="project" value="TreeGrafter"/>
</dbReference>
<dbReference type="GO" id="GO:0005524">
    <property type="term" value="F:ATP binding"/>
    <property type="evidence" value="ECO:0007669"/>
    <property type="project" value="UniProtKB-UniRule"/>
</dbReference>
<dbReference type="GO" id="GO:0046872">
    <property type="term" value="F:metal ion binding"/>
    <property type="evidence" value="ECO:0007669"/>
    <property type="project" value="UniProtKB-KW"/>
</dbReference>
<dbReference type="GO" id="GO:0004829">
    <property type="term" value="F:threonine-tRNA ligase activity"/>
    <property type="evidence" value="ECO:0007669"/>
    <property type="project" value="UniProtKB-UniRule"/>
</dbReference>
<dbReference type="GO" id="GO:0000049">
    <property type="term" value="F:tRNA binding"/>
    <property type="evidence" value="ECO:0007669"/>
    <property type="project" value="UniProtKB-KW"/>
</dbReference>
<dbReference type="GO" id="GO:0006435">
    <property type="term" value="P:threonyl-tRNA aminoacylation"/>
    <property type="evidence" value="ECO:0007669"/>
    <property type="project" value="UniProtKB-UniRule"/>
</dbReference>
<dbReference type="CDD" id="cd01667">
    <property type="entry name" value="TGS_ThrRS"/>
    <property type="match status" value="1"/>
</dbReference>
<dbReference type="CDD" id="cd00860">
    <property type="entry name" value="ThrRS_anticodon"/>
    <property type="match status" value="1"/>
</dbReference>
<dbReference type="CDD" id="cd00771">
    <property type="entry name" value="ThrRS_core"/>
    <property type="match status" value="1"/>
</dbReference>
<dbReference type="FunFam" id="3.10.20.30:FF:000005">
    <property type="entry name" value="Threonine--tRNA ligase"/>
    <property type="match status" value="1"/>
</dbReference>
<dbReference type="FunFam" id="3.30.54.20:FF:000002">
    <property type="entry name" value="Threonine--tRNA ligase"/>
    <property type="match status" value="1"/>
</dbReference>
<dbReference type="FunFam" id="3.30.930.10:FF:000002">
    <property type="entry name" value="Threonine--tRNA ligase"/>
    <property type="match status" value="1"/>
</dbReference>
<dbReference type="FunFam" id="3.40.50.800:FF:000001">
    <property type="entry name" value="Threonine--tRNA ligase"/>
    <property type="match status" value="1"/>
</dbReference>
<dbReference type="FunFam" id="3.30.980.10:FF:000005">
    <property type="entry name" value="Threonyl-tRNA synthetase, mitochondrial"/>
    <property type="match status" value="1"/>
</dbReference>
<dbReference type="Gene3D" id="3.10.20.30">
    <property type="match status" value="1"/>
</dbReference>
<dbReference type="Gene3D" id="3.30.54.20">
    <property type="match status" value="1"/>
</dbReference>
<dbReference type="Gene3D" id="3.40.50.800">
    <property type="entry name" value="Anticodon-binding domain"/>
    <property type="match status" value="1"/>
</dbReference>
<dbReference type="Gene3D" id="3.30.930.10">
    <property type="entry name" value="Bira Bifunctional Protein, Domain 2"/>
    <property type="match status" value="1"/>
</dbReference>
<dbReference type="Gene3D" id="3.30.980.10">
    <property type="entry name" value="Threonyl-trna Synthetase, Chain A, domain 2"/>
    <property type="match status" value="1"/>
</dbReference>
<dbReference type="HAMAP" id="MF_00184">
    <property type="entry name" value="Thr_tRNA_synth"/>
    <property type="match status" value="1"/>
</dbReference>
<dbReference type="InterPro" id="IPR002314">
    <property type="entry name" value="aa-tRNA-synt_IIb"/>
</dbReference>
<dbReference type="InterPro" id="IPR006195">
    <property type="entry name" value="aa-tRNA-synth_II"/>
</dbReference>
<dbReference type="InterPro" id="IPR045864">
    <property type="entry name" value="aa-tRNA-synth_II/BPL/LPL"/>
</dbReference>
<dbReference type="InterPro" id="IPR004154">
    <property type="entry name" value="Anticodon-bd"/>
</dbReference>
<dbReference type="InterPro" id="IPR036621">
    <property type="entry name" value="Anticodon-bd_dom_sf"/>
</dbReference>
<dbReference type="InterPro" id="IPR012675">
    <property type="entry name" value="Beta-grasp_dom_sf"/>
</dbReference>
<dbReference type="InterPro" id="IPR004095">
    <property type="entry name" value="TGS"/>
</dbReference>
<dbReference type="InterPro" id="IPR012676">
    <property type="entry name" value="TGS-like"/>
</dbReference>
<dbReference type="InterPro" id="IPR002320">
    <property type="entry name" value="Thr-tRNA-ligase_IIa"/>
</dbReference>
<dbReference type="InterPro" id="IPR018163">
    <property type="entry name" value="Thr/Ala-tRNA-synth_IIc_edit"/>
</dbReference>
<dbReference type="InterPro" id="IPR047246">
    <property type="entry name" value="ThrRS_anticodon"/>
</dbReference>
<dbReference type="InterPro" id="IPR033728">
    <property type="entry name" value="ThrRS_core"/>
</dbReference>
<dbReference type="InterPro" id="IPR012947">
    <property type="entry name" value="tRNA_SAD"/>
</dbReference>
<dbReference type="NCBIfam" id="TIGR00418">
    <property type="entry name" value="thrS"/>
    <property type="match status" value="1"/>
</dbReference>
<dbReference type="PANTHER" id="PTHR11451:SF44">
    <property type="entry name" value="THREONINE--TRNA LIGASE, CHLOROPLASTIC_MITOCHONDRIAL 2"/>
    <property type="match status" value="1"/>
</dbReference>
<dbReference type="PANTHER" id="PTHR11451">
    <property type="entry name" value="THREONINE-TRNA LIGASE"/>
    <property type="match status" value="1"/>
</dbReference>
<dbReference type="Pfam" id="PF03129">
    <property type="entry name" value="HGTP_anticodon"/>
    <property type="match status" value="1"/>
</dbReference>
<dbReference type="Pfam" id="PF02824">
    <property type="entry name" value="TGS"/>
    <property type="match status" value="1"/>
</dbReference>
<dbReference type="Pfam" id="PF00587">
    <property type="entry name" value="tRNA-synt_2b"/>
    <property type="match status" value="1"/>
</dbReference>
<dbReference type="Pfam" id="PF07973">
    <property type="entry name" value="tRNA_SAD"/>
    <property type="match status" value="1"/>
</dbReference>
<dbReference type="PRINTS" id="PR01047">
    <property type="entry name" value="TRNASYNTHTHR"/>
</dbReference>
<dbReference type="SMART" id="SM00863">
    <property type="entry name" value="tRNA_SAD"/>
    <property type="match status" value="1"/>
</dbReference>
<dbReference type="SUPFAM" id="SSF52954">
    <property type="entry name" value="Class II aaRS ABD-related"/>
    <property type="match status" value="1"/>
</dbReference>
<dbReference type="SUPFAM" id="SSF55681">
    <property type="entry name" value="Class II aaRS and biotin synthetases"/>
    <property type="match status" value="1"/>
</dbReference>
<dbReference type="SUPFAM" id="SSF81271">
    <property type="entry name" value="TGS-like"/>
    <property type="match status" value="1"/>
</dbReference>
<dbReference type="SUPFAM" id="SSF55186">
    <property type="entry name" value="ThrRS/AlaRS common domain"/>
    <property type="match status" value="1"/>
</dbReference>
<dbReference type="PROSITE" id="PS50862">
    <property type="entry name" value="AA_TRNA_LIGASE_II"/>
    <property type="match status" value="1"/>
</dbReference>
<dbReference type="PROSITE" id="PS51880">
    <property type="entry name" value="TGS"/>
    <property type="match status" value="1"/>
</dbReference>
<keyword id="KW-0030">Aminoacyl-tRNA synthetase</keyword>
<keyword id="KW-0067">ATP-binding</keyword>
<keyword id="KW-0963">Cytoplasm</keyword>
<keyword id="KW-0436">Ligase</keyword>
<keyword id="KW-0479">Metal-binding</keyword>
<keyword id="KW-0547">Nucleotide-binding</keyword>
<keyword id="KW-0648">Protein biosynthesis</keyword>
<keyword id="KW-1185">Reference proteome</keyword>
<keyword id="KW-0694">RNA-binding</keyword>
<keyword id="KW-0820">tRNA-binding</keyword>
<keyword id="KW-0862">Zinc</keyword>
<comment type="function">
    <text evidence="1">Catalyzes the attachment of threonine to tRNA(Thr) in a two-step reaction: L-threonine is first activated by ATP to form Thr-AMP and then transferred to the acceptor end of tRNA(Thr). Also edits incorrectly charged L-seryl-tRNA(Thr).</text>
</comment>
<comment type="catalytic activity">
    <reaction evidence="1">
        <text>tRNA(Thr) + L-threonine + ATP = L-threonyl-tRNA(Thr) + AMP + diphosphate + H(+)</text>
        <dbReference type="Rhea" id="RHEA:24624"/>
        <dbReference type="Rhea" id="RHEA-COMP:9670"/>
        <dbReference type="Rhea" id="RHEA-COMP:9704"/>
        <dbReference type="ChEBI" id="CHEBI:15378"/>
        <dbReference type="ChEBI" id="CHEBI:30616"/>
        <dbReference type="ChEBI" id="CHEBI:33019"/>
        <dbReference type="ChEBI" id="CHEBI:57926"/>
        <dbReference type="ChEBI" id="CHEBI:78442"/>
        <dbReference type="ChEBI" id="CHEBI:78534"/>
        <dbReference type="ChEBI" id="CHEBI:456215"/>
        <dbReference type="EC" id="6.1.1.3"/>
    </reaction>
</comment>
<comment type="cofactor">
    <cofactor evidence="1">
        <name>Zn(2+)</name>
        <dbReference type="ChEBI" id="CHEBI:29105"/>
    </cofactor>
    <text evidence="1">Binds 1 zinc ion per subunit.</text>
</comment>
<comment type="subunit">
    <text evidence="1">Homodimer.</text>
</comment>
<comment type="subcellular location">
    <subcellularLocation>
        <location evidence="1">Cytoplasm</location>
    </subcellularLocation>
</comment>
<comment type="similarity">
    <text evidence="1">Belongs to the class-II aminoacyl-tRNA synthetase family.</text>
</comment>
<sequence>MPVITLPDGSQRQFENAVSVLDVAASIGAGLAKACIAGRVNGELVDACELIETDATLSIITAKDQEGLEILRHSCAHLLGHAIKQLWPQTKMAIGPVIDNGFYYDVDLDQMLTEEDIQALEARMLELAQKDYDVVKKTVSWQEARDVFESRSETYKVAILDENIARDDKPGLYHHEEYIDMCRGPHVPNMRFCHHFKLQKTSGAYWRGDAKNKMLQRIYGTAWADKKQLNAYLQRLEEAAKRDHRKIGKQLDLYHMQEEAPGMVFWHNDGWIIFRELETFIRQKLREYDYEEVKGPFMMDRVLWERSGHWDKYADAMFTTSSENREYAIKPMNCPGHVQIFNQGLKSYRDLPLRMAEFGSCHRNEPSGSLHGLMRVRGFTQDDAHIFCAENQIQDEVSACIRMVYDTYSTFGFKNIAVKLSTRPEKRIGSDEMWDRAEEALSAALKHNNIEFDLQPGEGAFYGPKIEFTLHDCLDRAWQCGTVQLDFALPGRLGATYVGEDNDRHVPVMIHRAILGSMERFIGILTEETAGYFPLWLAPLQAVVMNITDNQADYVKEVVNTLNESGIRAKADLRNEKIGFKIREHTLKRVPYMLVCGDKEMEAGEIAVRTRRGVDLGKFKVTDLVEQLRKEISTRVLNVVEE</sequence>
<name>SYT_TOLAT</name>